<feature type="chain" id="PRO_1000088014" description="ADP-L-glycero-D-manno-heptose-6-epimerase">
    <location>
        <begin position="1"/>
        <end position="310"/>
    </location>
</feature>
<feature type="active site" description="Proton acceptor" evidence="1">
    <location>
        <position position="140"/>
    </location>
</feature>
<feature type="active site" description="Proton acceptor" evidence="1">
    <location>
        <position position="178"/>
    </location>
</feature>
<feature type="binding site" evidence="1">
    <location>
        <begin position="10"/>
        <end position="11"/>
    </location>
    <ligand>
        <name>NADP(+)</name>
        <dbReference type="ChEBI" id="CHEBI:58349"/>
    </ligand>
</feature>
<feature type="binding site" evidence="1">
    <location>
        <begin position="31"/>
        <end position="32"/>
    </location>
    <ligand>
        <name>NADP(+)</name>
        <dbReference type="ChEBI" id="CHEBI:58349"/>
    </ligand>
</feature>
<feature type="binding site" evidence="1">
    <location>
        <position position="38"/>
    </location>
    <ligand>
        <name>NADP(+)</name>
        <dbReference type="ChEBI" id="CHEBI:58349"/>
    </ligand>
</feature>
<feature type="binding site" evidence="1">
    <location>
        <position position="53"/>
    </location>
    <ligand>
        <name>NADP(+)</name>
        <dbReference type="ChEBI" id="CHEBI:58349"/>
    </ligand>
</feature>
<feature type="binding site" evidence="1">
    <location>
        <begin position="75"/>
        <end position="79"/>
    </location>
    <ligand>
        <name>NADP(+)</name>
        <dbReference type="ChEBI" id="CHEBI:58349"/>
    </ligand>
</feature>
<feature type="binding site" evidence="1">
    <location>
        <position position="92"/>
    </location>
    <ligand>
        <name>NADP(+)</name>
        <dbReference type="ChEBI" id="CHEBI:58349"/>
    </ligand>
</feature>
<feature type="binding site" evidence="1">
    <location>
        <position position="144"/>
    </location>
    <ligand>
        <name>NADP(+)</name>
        <dbReference type="ChEBI" id="CHEBI:58349"/>
    </ligand>
</feature>
<feature type="binding site" evidence="1">
    <location>
        <position position="169"/>
    </location>
    <ligand>
        <name>substrate</name>
    </ligand>
</feature>
<feature type="binding site" evidence="1">
    <location>
        <position position="170"/>
    </location>
    <ligand>
        <name>NADP(+)</name>
        <dbReference type="ChEBI" id="CHEBI:58349"/>
    </ligand>
</feature>
<feature type="binding site" evidence="1">
    <location>
        <position position="178"/>
    </location>
    <ligand>
        <name>NADP(+)</name>
        <dbReference type="ChEBI" id="CHEBI:58349"/>
    </ligand>
</feature>
<feature type="binding site" evidence="1">
    <location>
        <position position="180"/>
    </location>
    <ligand>
        <name>substrate</name>
    </ligand>
</feature>
<feature type="binding site" evidence="1">
    <location>
        <position position="187"/>
    </location>
    <ligand>
        <name>substrate</name>
    </ligand>
</feature>
<feature type="binding site" evidence="1">
    <location>
        <begin position="201"/>
        <end position="204"/>
    </location>
    <ligand>
        <name>substrate</name>
    </ligand>
</feature>
<feature type="binding site" evidence="1">
    <location>
        <position position="209"/>
    </location>
    <ligand>
        <name>substrate</name>
    </ligand>
</feature>
<feature type="binding site" evidence="1">
    <location>
        <position position="272"/>
    </location>
    <ligand>
        <name>substrate</name>
    </ligand>
</feature>
<dbReference type="EC" id="5.1.3.20" evidence="1"/>
<dbReference type="EMBL" id="CP000886">
    <property type="protein sequence ID" value="ABX69920.1"/>
    <property type="molecule type" value="Genomic_DNA"/>
</dbReference>
<dbReference type="SMR" id="A9MVL2"/>
<dbReference type="KEGG" id="spq:SPAB_04607"/>
<dbReference type="PATRIC" id="fig|1016998.12.peg.4333"/>
<dbReference type="HOGENOM" id="CLU_007383_1_3_6"/>
<dbReference type="BioCyc" id="SENT1016998:SPAB_RS18745-MONOMER"/>
<dbReference type="UniPathway" id="UPA00356">
    <property type="reaction ID" value="UER00440"/>
</dbReference>
<dbReference type="Proteomes" id="UP000008556">
    <property type="component" value="Chromosome"/>
</dbReference>
<dbReference type="GO" id="GO:0008712">
    <property type="term" value="F:ADP-glyceromanno-heptose 6-epimerase activity"/>
    <property type="evidence" value="ECO:0007669"/>
    <property type="project" value="UniProtKB-UniRule"/>
</dbReference>
<dbReference type="GO" id="GO:0050661">
    <property type="term" value="F:NADP binding"/>
    <property type="evidence" value="ECO:0007669"/>
    <property type="project" value="InterPro"/>
</dbReference>
<dbReference type="GO" id="GO:0097171">
    <property type="term" value="P:ADP-L-glycero-beta-D-manno-heptose biosynthetic process"/>
    <property type="evidence" value="ECO:0007669"/>
    <property type="project" value="UniProtKB-UniPathway"/>
</dbReference>
<dbReference type="GO" id="GO:0005975">
    <property type="term" value="P:carbohydrate metabolic process"/>
    <property type="evidence" value="ECO:0007669"/>
    <property type="project" value="UniProtKB-UniRule"/>
</dbReference>
<dbReference type="CDD" id="cd05248">
    <property type="entry name" value="ADP_GME_SDR_e"/>
    <property type="match status" value="1"/>
</dbReference>
<dbReference type="Gene3D" id="3.40.50.720">
    <property type="entry name" value="NAD(P)-binding Rossmann-like Domain"/>
    <property type="match status" value="1"/>
</dbReference>
<dbReference type="Gene3D" id="3.90.25.10">
    <property type="entry name" value="UDP-galactose 4-epimerase, domain 1"/>
    <property type="match status" value="1"/>
</dbReference>
<dbReference type="HAMAP" id="MF_01601">
    <property type="entry name" value="Heptose_epimerase"/>
    <property type="match status" value="1"/>
</dbReference>
<dbReference type="InterPro" id="IPR001509">
    <property type="entry name" value="Epimerase_deHydtase"/>
</dbReference>
<dbReference type="InterPro" id="IPR011912">
    <property type="entry name" value="Heptose_epim"/>
</dbReference>
<dbReference type="InterPro" id="IPR036291">
    <property type="entry name" value="NAD(P)-bd_dom_sf"/>
</dbReference>
<dbReference type="NCBIfam" id="TIGR02197">
    <property type="entry name" value="heptose_epim"/>
    <property type="match status" value="1"/>
</dbReference>
<dbReference type="NCBIfam" id="NF008360">
    <property type="entry name" value="PRK11150.1"/>
    <property type="match status" value="1"/>
</dbReference>
<dbReference type="PANTHER" id="PTHR43103:SF3">
    <property type="entry name" value="ADP-L-GLYCERO-D-MANNO-HEPTOSE-6-EPIMERASE"/>
    <property type="match status" value="1"/>
</dbReference>
<dbReference type="PANTHER" id="PTHR43103">
    <property type="entry name" value="NUCLEOSIDE-DIPHOSPHATE-SUGAR EPIMERASE"/>
    <property type="match status" value="1"/>
</dbReference>
<dbReference type="Pfam" id="PF01370">
    <property type="entry name" value="Epimerase"/>
    <property type="match status" value="1"/>
</dbReference>
<dbReference type="SUPFAM" id="SSF51735">
    <property type="entry name" value="NAD(P)-binding Rossmann-fold domains"/>
    <property type="match status" value="1"/>
</dbReference>
<evidence type="ECO:0000255" key="1">
    <source>
        <dbReference type="HAMAP-Rule" id="MF_01601"/>
    </source>
</evidence>
<sequence>MIIVTGGAGFIGSNIVKALNDKGITDILVVDNLKDGTKFVNLVDLNIADYMDKEDFLIQIMSGEELGDIEAIFHEGACSSTTEWDGKYMMDNNYQYSKELLHYCLEREIPFLYASSAATYGGRTSDFIESREYEKPLNVYGYSKFLFDEYVRQILPEANSQIVGFRYFNVYGPREGHKGSMASVAFHLNTQLNNGESPKLFEGSENFKRDFVYVGDVAAVNLWFLESGKSGIFNLGTGRAESFQAVADATLAYHKKGSIEYIPFPDKLKGRYQAFTQADLTNLRNAGYDKPFKTVAEGVTEYMAWLNRDA</sequence>
<gene>
    <name evidence="1" type="primary">hldD</name>
    <name type="ordered locus">SPAB_04607</name>
</gene>
<reference key="1">
    <citation type="submission" date="2007-11" db="EMBL/GenBank/DDBJ databases">
        <authorList>
            <consortium name="The Salmonella enterica serovar Paratyphi B Genome Sequencing Project"/>
            <person name="McClelland M."/>
            <person name="Sanderson E.K."/>
            <person name="Porwollik S."/>
            <person name="Spieth J."/>
            <person name="Clifton W.S."/>
            <person name="Fulton R."/>
            <person name="Cordes M."/>
            <person name="Wollam A."/>
            <person name="Shah N."/>
            <person name="Pepin K."/>
            <person name="Bhonagiri V."/>
            <person name="Nash W."/>
            <person name="Johnson M."/>
            <person name="Thiruvilangam P."/>
            <person name="Wilson R."/>
        </authorList>
    </citation>
    <scope>NUCLEOTIDE SEQUENCE [LARGE SCALE GENOMIC DNA]</scope>
    <source>
        <strain>ATCC BAA-1250 / SPB7</strain>
    </source>
</reference>
<name>HLDD_SALPB</name>
<comment type="function">
    <text evidence="1">Catalyzes the interconversion between ADP-D-glycero-beta-D-manno-heptose and ADP-L-glycero-beta-D-manno-heptose via an epimerization at carbon 6 of the heptose.</text>
</comment>
<comment type="catalytic activity">
    <reaction evidence="1">
        <text>ADP-D-glycero-beta-D-manno-heptose = ADP-L-glycero-beta-D-manno-heptose</text>
        <dbReference type="Rhea" id="RHEA:17577"/>
        <dbReference type="ChEBI" id="CHEBI:59967"/>
        <dbReference type="ChEBI" id="CHEBI:61506"/>
        <dbReference type="EC" id="5.1.3.20"/>
    </reaction>
</comment>
<comment type="cofactor">
    <cofactor evidence="1">
        <name>NADP(+)</name>
        <dbReference type="ChEBI" id="CHEBI:58349"/>
    </cofactor>
    <text evidence="1">Binds 1 NADP(+) per subunit.</text>
</comment>
<comment type="pathway">
    <text evidence="1">Nucleotide-sugar biosynthesis; ADP-L-glycero-beta-D-manno-heptose biosynthesis; ADP-L-glycero-beta-D-manno-heptose from D-glycero-beta-D-manno-heptose 7-phosphate: step 4/4.</text>
</comment>
<comment type="subunit">
    <text evidence="1">Homopentamer.</text>
</comment>
<comment type="domain">
    <text evidence="1">Contains a large N-terminal NADP-binding domain, and a smaller C-terminal substrate-binding domain.</text>
</comment>
<comment type="similarity">
    <text evidence="1">Belongs to the NAD(P)-dependent epimerase/dehydratase family. HldD subfamily.</text>
</comment>
<keyword id="KW-0119">Carbohydrate metabolism</keyword>
<keyword id="KW-0413">Isomerase</keyword>
<keyword id="KW-0521">NADP</keyword>
<protein>
    <recommendedName>
        <fullName evidence="1">ADP-L-glycero-D-manno-heptose-6-epimerase</fullName>
        <ecNumber evidence="1">5.1.3.20</ecNumber>
    </recommendedName>
    <alternativeName>
        <fullName evidence="1">ADP-L-glycero-beta-D-manno-heptose-6-epimerase</fullName>
        <shortName evidence="1">ADP-glyceromanno-heptose 6-epimerase</shortName>
        <shortName evidence="1">ADP-hep 6-epimerase</shortName>
        <shortName evidence="1">AGME</shortName>
    </alternativeName>
</protein>
<proteinExistence type="inferred from homology"/>
<organism>
    <name type="scientific">Salmonella paratyphi B (strain ATCC BAA-1250 / SPB7)</name>
    <dbReference type="NCBI Taxonomy" id="1016998"/>
    <lineage>
        <taxon>Bacteria</taxon>
        <taxon>Pseudomonadati</taxon>
        <taxon>Pseudomonadota</taxon>
        <taxon>Gammaproteobacteria</taxon>
        <taxon>Enterobacterales</taxon>
        <taxon>Enterobacteriaceae</taxon>
        <taxon>Salmonella</taxon>
    </lineage>
</organism>
<accession>A9MVL2</accession>